<reference key="1">
    <citation type="journal article" date="2005" name="Nature">
        <title>Ipr1 gene mediates innate immunity to tuberculosis.</title>
        <authorList>
            <person name="Pan H."/>
            <person name="Yan B.-S."/>
            <person name="Rojas M."/>
            <person name="Shebzukhov Y.V."/>
            <person name="Zhou H."/>
            <person name="Kobzik L."/>
            <person name="Higgins D.E."/>
            <person name="Daly M.J."/>
            <person name="Bloom B.R."/>
            <person name="Kramnik I."/>
        </authorList>
    </citation>
    <scope>NUCLEOTIDE SEQUENCE [MRNA]</scope>
    <scope>FUNCTION</scope>
    <scope>DISEASE</scope>
    <scope>INDUCTION</scope>
    <scope>TISSUE SPECIFICITY</scope>
    <source>
        <strain>C3Heb/FeJ</strain>
        <tissue>Lung</tissue>
    </source>
</reference>
<reference key="2">
    <citation type="journal article" date="2005" name="Science">
        <title>The transcriptional landscape of the mammalian genome.</title>
        <authorList>
            <person name="Carninci P."/>
            <person name="Kasukawa T."/>
            <person name="Katayama S."/>
            <person name="Gough J."/>
            <person name="Frith M.C."/>
            <person name="Maeda N."/>
            <person name="Oyama R."/>
            <person name="Ravasi T."/>
            <person name="Lenhard B."/>
            <person name="Wells C."/>
            <person name="Kodzius R."/>
            <person name="Shimokawa K."/>
            <person name="Bajic V.B."/>
            <person name="Brenner S.E."/>
            <person name="Batalov S."/>
            <person name="Forrest A.R."/>
            <person name="Zavolan M."/>
            <person name="Davis M.J."/>
            <person name="Wilming L.G."/>
            <person name="Aidinis V."/>
            <person name="Allen J.E."/>
            <person name="Ambesi-Impiombato A."/>
            <person name="Apweiler R."/>
            <person name="Aturaliya R.N."/>
            <person name="Bailey T.L."/>
            <person name="Bansal M."/>
            <person name="Baxter L."/>
            <person name="Beisel K.W."/>
            <person name="Bersano T."/>
            <person name="Bono H."/>
            <person name="Chalk A.M."/>
            <person name="Chiu K.P."/>
            <person name="Choudhary V."/>
            <person name="Christoffels A."/>
            <person name="Clutterbuck D.R."/>
            <person name="Crowe M.L."/>
            <person name="Dalla E."/>
            <person name="Dalrymple B.P."/>
            <person name="de Bono B."/>
            <person name="Della Gatta G."/>
            <person name="di Bernardo D."/>
            <person name="Down T."/>
            <person name="Engstrom P."/>
            <person name="Fagiolini M."/>
            <person name="Faulkner G."/>
            <person name="Fletcher C.F."/>
            <person name="Fukushima T."/>
            <person name="Furuno M."/>
            <person name="Futaki S."/>
            <person name="Gariboldi M."/>
            <person name="Georgii-Hemming P."/>
            <person name="Gingeras T.R."/>
            <person name="Gojobori T."/>
            <person name="Green R.E."/>
            <person name="Gustincich S."/>
            <person name="Harbers M."/>
            <person name="Hayashi Y."/>
            <person name="Hensch T.K."/>
            <person name="Hirokawa N."/>
            <person name="Hill D."/>
            <person name="Huminiecki L."/>
            <person name="Iacono M."/>
            <person name="Ikeo K."/>
            <person name="Iwama A."/>
            <person name="Ishikawa T."/>
            <person name="Jakt M."/>
            <person name="Kanapin A."/>
            <person name="Katoh M."/>
            <person name="Kawasawa Y."/>
            <person name="Kelso J."/>
            <person name="Kitamura H."/>
            <person name="Kitano H."/>
            <person name="Kollias G."/>
            <person name="Krishnan S.P."/>
            <person name="Kruger A."/>
            <person name="Kummerfeld S.K."/>
            <person name="Kurochkin I.V."/>
            <person name="Lareau L.F."/>
            <person name="Lazarevic D."/>
            <person name="Lipovich L."/>
            <person name="Liu J."/>
            <person name="Liuni S."/>
            <person name="McWilliam S."/>
            <person name="Madan Babu M."/>
            <person name="Madera M."/>
            <person name="Marchionni L."/>
            <person name="Matsuda H."/>
            <person name="Matsuzawa S."/>
            <person name="Miki H."/>
            <person name="Mignone F."/>
            <person name="Miyake S."/>
            <person name="Morris K."/>
            <person name="Mottagui-Tabar S."/>
            <person name="Mulder N."/>
            <person name="Nakano N."/>
            <person name="Nakauchi H."/>
            <person name="Ng P."/>
            <person name="Nilsson R."/>
            <person name="Nishiguchi S."/>
            <person name="Nishikawa S."/>
            <person name="Nori F."/>
            <person name="Ohara O."/>
            <person name="Okazaki Y."/>
            <person name="Orlando V."/>
            <person name="Pang K.C."/>
            <person name="Pavan W.J."/>
            <person name="Pavesi G."/>
            <person name="Pesole G."/>
            <person name="Petrovsky N."/>
            <person name="Piazza S."/>
            <person name="Reed J."/>
            <person name="Reid J.F."/>
            <person name="Ring B.Z."/>
            <person name="Ringwald M."/>
            <person name="Rost B."/>
            <person name="Ruan Y."/>
            <person name="Salzberg S.L."/>
            <person name="Sandelin A."/>
            <person name="Schneider C."/>
            <person name="Schoenbach C."/>
            <person name="Sekiguchi K."/>
            <person name="Semple C.A."/>
            <person name="Seno S."/>
            <person name="Sessa L."/>
            <person name="Sheng Y."/>
            <person name="Shibata Y."/>
            <person name="Shimada H."/>
            <person name="Shimada K."/>
            <person name="Silva D."/>
            <person name="Sinclair B."/>
            <person name="Sperling S."/>
            <person name="Stupka E."/>
            <person name="Sugiura K."/>
            <person name="Sultana R."/>
            <person name="Takenaka Y."/>
            <person name="Taki K."/>
            <person name="Tammoja K."/>
            <person name="Tan S.L."/>
            <person name="Tang S."/>
            <person name="Taylor M.S."/>
            <person name="Tegner J."/>
            <person name="Teichmann S.A."/>
            <person name="Ueda H.R."/>
            <person name="van Nimwegen E."/>
            <person name="Verardo R."/>
            <person name="Wei C.L."/>
            <person name="Yagi K."/>
            <person name="Yamanishi H."/>
            <person name="Zabarovsky E."/>
            <person name="Zhu S."/>
            <person name="Zimmer A."/>
            <person name="Hide W."/>
            <person name="Bult C."/>
            <person name="Grimmond S.M."/>
            <person name="Teasdale R.D."/>
            <person name="Liu E.T."/>
            <person name="Brusic V."/>
            <person name="Quackenbush J."/>
            <person name="Wahlestedt C."/>
            <person name="Mattick J.S."/>
            <person name="Hume D.A."/>
            <person name="Kai C."/>
            <person name="Sasaki D."/>
            <person name="Tomaru Y."/>
            <person name="Fukuda S."/>
            <person name="Kanamori-Katayama M."/>
            <person name="Suzuki M."/>
            <person name="Aoki J."/>
            <person name="Arakawa T."/>
            <person name="Iida J."/>
            <person name="Imamura K."/>
            <person name="Itoh M."/>
            <person name="Kato T."/>
            <person name="Kawaji H."/>
            <person name="Kawagashira N."/>
            <person name="Kawashima T."/>
            <person name="Kojima M."/>
            <person name="Kondo S."/>
            <person name="Konno H."/>
            <person name="Nakano K."/>
            <person name="Ninomiya N."/>
            <person name="Nishio T."/>
            <person name="Okada M."/>
            <person name="Plessy C."/>
            <person name="Shibata K."/>
            <person name="Shiraki T."/>
            <person name="Suzuki S."/>
            <person name="Tagami M."/>
            <person name="Waki K."/>
            <person name="Watahiki A."/>
            <person name="Okamura-Oho Y."/>
            <person name="Suzuki H."/>
            <person name="Kawai J."/>
            <person name="Hayashizaki Y."/>
        </authorList>
    </citation>
    <scope>NUCLEOTIDE SEQUENCE [LARGE SCALE MRNA]</scope>
    <source>
        <strain>C57BL/6J</strain>
        <tissue>Bone marrow</tissue>
        <tissue>Thymus</tissue>
    </source>
</reference>
<reference key="3">
    <citation type="journal article" date="2004" name="Genome Res.">
        <title>The status, quality, and expansion of the NIH full-length cDNA project: the Mammalian Gene Collection (MGC).</title>
        <authorList>
            <consortium name="The MGC Project Team"/>
        </authorList>
    </citation>
    <scope>NUCLEOTIDE SEQUENCE [LARGE SCALE MRNA]</scope>
    <source>
        <strain>Czech II</strain>
        <strain>NMRI</strain>
        <tissue>Mammary tumor</tissue>
    </source>
</reference>
<reference key="4">
    <citation type="journal article" date="2009" name="Immunity">
        <title>The phagosomal proteome in interferon-gamma-activated macrophages.</title>
        <authorList>
            <person name="Trost M."/>
            <person name="English L."/>
            <person name="Lemieux S."/>
            <person name="Courcelles M."/>
            <person name="Desjardins M."/>
            <person name="Thibault P."/>
        </authorList>
    </citation>
    <scope>PHOSPHORYLATION [LARGE SCALE ANALYSIS] AT SER-175 AND SER-177</scope>
    <scope>IDENTIFICATION BY MASS SPECTROMETRY [LARGE SCALE ANALYSIS]</scope>
</reference>
<reference key="5">
    <citation type="journal article" date="2010" name="Cell">
        <title>A tissue-specific atlas of mouse protein phosphorylation and expression.</title>
        <authorList>
            <person name="Huttlin E.L."/>
            <person name="Jedrychowski M.P."/>
            <person name="Elias J.E."/>
            <person name="Goswami T."/>
            <person name="Rad R."/>
            <person name="Beausoleil S.A."/>
            <person name="Villen J."/>
            <person name="Haas W."/>
            <person name="Sowa M.E."/>
            <person name="Gygi S.P."/>
        </authorList>
    </citation>
    <scope>PHOSPHORYLATION [LARGE SCALE ANALYSIS] AT SER-226</scope>
    <scope>IDENTIFICATION BY MASS SPECTROMETRY [LARGE SCALE ANALYSIS]</scope>
    <source>
        <tissue>Lung</tissue>
        <tissue>Spleen</tissue>
    </source>
</reference>
<reference key="6">
    <citation type="submission" date="2004-06" db="PDB data bank">
        <title>Solution structure of the SAND domain of the putative nuclear protein homolog (5830484A20RIK).</title>
        <authorList>
            <consortium name="RIKEN structural genomics initiative (RSGI)"/>
        </authorList>
    </citation>
    <scope>STRUCTURE BY NMR OF 353-433</scope>
</reference>
<accession>Q8BVK9</accession>
<accession>Q05D41</accession>
<accession>Q3UCV7</accession>
<accession>Q80V00</accession>
<name>SP110_MOUSE</name>
<proteinExistence type="evidence at protein level"/>
<keyword id="KW-0002">3D-structure</keyword>
<keyword id="KW-0053">Apoptosis</keyword>
<keyword id="KW-0238">DNA-binding</keyword>
<keyword id="KW-0391">Immunity</keyword>
<keyword id="KW-0399">Innate immunity</keyword>
<keyword id="KW-0539">Nucleus</keyword>
<keyword id="KW-0597">Phosphoprotein</keyword>
<keyword id="KW-1185">Reference proteome</keyword>
<keyword id="KW-0804">Transcription</keyword>
<keyword id="KW-0805">Transcription regulation</keyword>
<feature type="chain" id="PRO_0000247960" description="Sp110 nuclear body protein">
    <location>
        <begin position="1"/>
        <end position="445"/>
    </location>
</feature>
<feature type="domain" description="HSR" evidence="4">
    <location>
        <begin position="1"/>
        <end position="108"/>
    </location>
</feature>
<feature type="domain" description="SAND" evidence="3">
    <location>
        <begin position="353"/>
        <end position="433"/>
    </location>
</feature>
<feature type="region of interest" description="Disordered" evidence="5">
    <location>
        <begin position="187"/>
        <end position="356"/>
    </location>
</feature>
<feature type="short sequence motif" description="Nuclear localization signal" evidence="2">
    <location>
        <begin position="251"/>
        <end position="266"/>
    </location>
</feature>
<feature type="compositionally biased region" description="Basic and acidic residues" evidence="5">
    <location>
        <begin position="197"/>
        <end position="212"/>
    </location>
</feature>
<feature type="compositionally biased region" description="Basic residues" evidence="5">
    <location>
        <begin position="245"/>
        <end position="267"/>
    </location>
</feature>
<feature type="modified residue" description="Phosphoserine" evidence="8">
    <location>
        <position position="175"/>
    </location>
</feature>
<feature type="modified residue" description="Phosphoserine" evidence="8">
    <location>
        <position position="177"/>
    </location>
</feature>
<feature type="modified residue" description="Phosphoserine" evidence="9">
    <location>
        <position position="226"/>
    </location>
</feature>
<feature type="modified residue" description="Phosphoserine" evidence="1">
    <location>
        <position position="277"/>
    </location>
</feature>
<feature type="sequence conflict" description="In Ref. 3; AAH18413/AAH39938." evidence="7" ref="3">
    <original>P</original>
    <variation>L</variation>
    <location>
        <position position="154"/>
    </location>
</feature>
<feature type="sequence conflict" description="In Ref. 3; AAH18413/AAH39938." evidence="7" ref="3">
    <original>L</original>
    <variation>P</variation>
    <location>
        <position position="184"/>
    </location>
</feature>
<feature type="sequence conflict" description="In Ref. 3; AAH39938." evidence="7" ref="3">
    <original>A</original>
    <variation>G</variation>
    <location>
        <position position="247"/>
    </location>
</feature>
<feature type="sequence conflict" description="In Ref. 3; AAH39938." evidence="7" ref="3">
    <original>R</original>
    <variation>H</variation>
    <location>
        <position position="252"/>
    </location>
</feature>
<feature type="sequence conflict" description="In Ref. 3; AAH39938." evidence="7" ref="3">
    <original>M</original>
    <variation>MA</variation>
    <location>
        <position position="273"/>
    </location>
</feature>
<feature type="sequence conflict" description="In Ref. 3; AAH39938." evidence="7" ref="3">
    <original>Q</original>
    <variation>L</variation>
    <location>
        <position position="310"/>
    </location>
</feature>
<feature type="sequence conflict" description="In Ref. 3; AAH39938." evidence="7" ref="3">
    <original>T</original>
    <variation>A</variation>
    <location>
        <position position="312"/>
    </location>
</feature>
<feature type="sequence conflict" description="In Ref. 2; BAE29505." evidence="7" ref="2">
    <original>E</original>
    <variation>G</variation>
    <location>
        <position position="324"/>
    </location>
</feature>
<feature type="sequence conflict" description="In Ref. 3; AAH39938." evidence="7" ref="3">
    <original>G</original>
    <variation>R</variation>
    <location>
        <position position="405"/>
    </location>
</feature>
<feature type="sequence conflict" description="In Ref. 3; AAH39938." evidence="7" ref="3">
    <original>R</original>
    <variation>C</variation>
    <location>
        <position position="417"/>
    </location>
</feature>
<feature type="sequence conflict" description="In Ref. 3; AAH39938." evidence="7" ref="3">
    <original>FT</original>
    <variation>CI</variation>
    <location>
        <begin position="434"/>
        <end position="435"/>
    </location>
</feature>
<feature type="helix" evidence="10">
    <location>
        <begin position="355"/>
        <end position="358"/>
    </location>
</feature>
<feature type="strand" evidence="10">
    <location>
        <begin position="359"/>
        <end position="366"/>
    </location>
</feature>
<feature type="strand" evidence="10">
    <location>
        <begin position="369"/>
        <end position="374"/>
    </location>
</feature>
<feature type="helix" evidence="10">
    <location>
        <begin position="375"/>
        <end position="379"/>
    </location>
</feature>
<feature type="helix" evidence="10">
    <location>
        <begin position="397"/>
        <end position="404"/>
    </location>
</feature>
<feature type="helix" evidence="10">
    <location>
        <begin position="412"/>
        <end position="415"/>
    </location>
</feature>
<feature type="helix" evidence="10">
    <location>
        <begin position="423"/>
        <end position="428"/>
    </location>
</feature>
<evidence type="ECO:0000250" key="1">
    <source>
        <dbReference type="UniProtKB" id="Q9HB58"/>
    </source>
</evidence>
<evidence type="ECO:0000255" key="2"/>
<evidence type="ECO:0000255" key="3">
    <source>
        <dbReference type="PROSITE-ProRule" id="PRU00185"/>
    </source>
</evidence>
<evidence type="ECO:0000255" key="4">
    <source>
        <dbReference type="PROSITE-ProRule" id="PRU00747"/>
    </source>
</evidence>
<evidence type="ECO:0000256" key="5">
    <source>
        <dbReference type="SAM" id="MobiDB-lite"/>
    </source>
</evidence>
<evidence type="ECO:0000269" key="6">
    <source>
    </source>
</evidence>
<evidence type="ECO:0000305" key="7"/>
<evidence type="ECO:0007744" key="8">
    <source>
    </source>
</evidence>
<evidence type="ECO:0007744" key="9">
    <source>
    </source>
</evidence>
<evidence type="ECO:0007829" key="10">
    <source>
        <dbReference type="PDB" id="1UFN"/>
    </source>
</evidence>
<sequence>MFTLTKALEKALLQHFIYMKVNIAYAINKPFPFFEALRDNSFITERMYKESLEACQNLVPLSKVVHNILTSLEQTFHPSVLLTLFSKVNLREYPSLVAIFRSFRNVGYTYEEKNRPPLTLLEDLANPAEGCSLQTLLPPPRPQISLPSHLSSAPRVCDPRATAQPIIEILDEQPSPSPRAVPLLGCIQEGKTTPVSSRDHQRKDKEDSREMPHSPSGPESVVKDDSPAANDLEMAREVPCTPANKKARRKKRPNWSNSKRRRQKKKPRQDEMMGVASPGHGVQEKLKAVSRRTLWKDDSSTNVKEVTKTQRTRMRRAQTSNSQEISKEASKTSGRKRPSTARRTTQVPEKTKNDAVDFSPTLPVTCGKAKGTLFQEKLKQGASKKCIQNEAGDWLTVKEFLNEGGRATSKDWKGVIRCNGETLRHLEQKGLLFFTSKSKPQKKGA</sequence>
<organism>
    <name type="scientific">Mus musculus</name>
    <name type="common">Mouse</name>
    <dbReference type="NCBI Taxonomy" id="10090"/>
    <lineage>
        <taxon>Eukaryota</taxon>
        <taxon>Metazoa</taxon>
        <taxon>Chordata</taxon>
        <taxon>Craniata</taxon>
        <taxon>Vertebrata</taxon>
        <taxon>Euteleostomi</taxon>
        <taxon>Mammalia</taxon>
        <taxon>Eutheria</taxon>
        <taxon>Euarchontoglires</taxon>
        <taxon>Glires</taxon>
        <taxon>Rodentia</taxon>
        <taxon>Myomorpha</taxon>
        <taxon>Muroidea</taxon>
        <taxon>Muridae</taxon>
        <taxon>Murinae</taxon>
        <taxon>Mus</taxon>
        <taxon>Mus</taxon>
    </lineage>
</organism>
<protein>
    <recommendedName>
        <fullName>Sp110 nuclear body protein</fullName>
    </recommendedName>
    <alternativeName>
        <fullName>Intracellular pathogen resistance protein 1</fullName>
    </alternativeName>
</protein>
<gene>
    <name type="primary">Sp110</name>
    <name type="synonym">Ifi75</name>
    <name type="synonym">Ipr1</name>
</gene>
<dbReference type="EMBL" id="AY845948">
    <property type="protein sequence ID" value="AAW32543.1"/>
    <property type="molecule type" value="mRNA"/>
</dbReference>
<dbReference type="EMBL" id="AK077800">
    <property type="protein sequence ID" value="BAC37018.1"/>
    <property type="molecule type" value="mRNA"/>
</dbReference>
<dbReference type="EMBL" id="AK150373">
    <property type="protein sequence ID" value="BAE29505.1"/>
    <property type="molecule type" value="mRNA"/>
</dbReference>
<dbReference type="EMBL" id="BC018413">
    <property type="protein sequence ID" value="AAH18413.1"/>
    <property type="status" value="ALT_SEQ"/>
    <property type="molecule type" value="mRNA"/>
</dbReference>
<dbReference type="EMBL" id="BC039938">
    <property type="protein sequence ID" value="AAH39938.1"/>
    <property type="molecule type" value="mRNA"/>
</dbReference>
<dbReference type="EMBL" id="BC094500">
    <property type="protein sequence ID" value="AAH94500.1"/>
    <property type="molecule type" value="mRNA"/>
</dbReference>
<dbReference type="CCDS" id="CCDS35637.1"/>
<dbReference type="RefSeq" id="NP_084470.1">
    <property type="nucleotide sequence ID" value="NM_030194.1"/>
</dbReference>
<dbReference type="RefSeq" id="NP_780606.3">
    <property type="nucleotide sequence ID" value="NM_175397.4"/>
</dbReference>
<dbReference type="PDB" id="1UFN">
    <property type="method" value="NMR"/>
    <property type="chains" value="A=353-433"/>
</dbReference>
<dbReference type="PDBsum" id="1UFN"/>
<dbReference type="BMRB" id="Q8BVK9"/>
<dbReference type="SMR" id="Q8BVK9"/>
<dbReference type="BioGRID" id="224528">
    <property type="interactions" value="2"/>
</dbReference>
<dbReference type="FunCoup" id="Q8BVK9">
    <property type="interactions" value="775"/>
</dbReference>
<dbReference type="STRING" id="10090.ENSMUSP00000091226"/>
<dbReference type="GlyGen" id="Q8BVK9">
    <property type="glycosylation" value="2 sites, 1 O-linked glycan (2 sites)"/>
</dbReference>
<dbReference type="iPTMnet" id="Q8BVK9"/>
<dbReference type="PhosphoSitePlus" id="Q8BVK9"/>
<dbReference type="SwissPalm" id="Q8BVK9"/>
<dbReference type="jPOST" id="Q8BVK9"/>
<dbReference type="PaxDb" id="10090-ENSMUSP00000091226"/>
<dbReference type="PeptideAtlas" id="Q8BVK9"/>
<dbReference type="ProteomicsDB" id="257546"/>
<dbReference type="DNASU" id="109032"/>
<dbReference type="Ensembl" id="ENSMUST00000093508.7">
    <property type="protein sequence ID" value="ENSMUSP00000091226.7"/>
    <property type="gene ID" value="ENSMUSG00000070034.14"/>
</dbReference>
<dbReference type="GeneID" id="109032"/>
<dbReference type="KEGG" id="mmu:109032"/>
<dbReference type="UCSC" id="uc007btz.2">
    <property type="organism name" value="mouse"/>
</dbReference>
<dbReference type="AGR" id="MGI:1923364"/>
<dbReference type="CTD" id="3431"/>
<dbReference type="MGI" id="MGI:1923364">
    <property type="gene designation" value="Sp110"/>
</dbReference>
<dbReference type="VEuPathDB" id="HostDB:ENSMUSG00000070034"/>
<dbReference type="eggNOG" id="KOG2177">
    <property type="taxonomic scope" value="Eukaryota"/>
</dbReference>
<dbReference type="GeneTree" id="ENSGT00940000155124"/>
<dbReference type="HOGENOM" id="CLU_015844_2_0_1"/>
<dbReference type="InParanoid" id="Q8BVK9"/>
<dbReference type="OMA" id="QKARNEC"/>
<dbReference type="PhylomeDB" id="Q8BVK9"/>
<dbReference type="TreeFam" id="TF335091"/>
<dbReference type="BioGRID-ORCS" id="109032">
    <property type="hits" value="18 hits in 77 CRISPR screens"/>
</dbReference>
<dbReference type="ChiTaRS" id="Sp110">
    <property type="organism name" value="mouse"/>
</dbReference>
<dbReference type="EvolutionaryTrace" id="Q8BVK9"/>
<dbReference type="PRO" id="PR:Q8BVK9"/>
<dbReference type="Proteomes" id="UP000000589">
    <property type="component" value="Chromosome 1"/>
</dbReference>
<dbReference type="RNAct" id="Q8BVK9">
    <property type="molecule type" value="protein"/>
</dbReference>
<dbReference type="Bgee" id="ENSMUSG00000070034">
    <property type="expression patterns" value="Expressed in animal zygote and 67 other cell types or tissues"/>
</dbReference>
<dbReference type="GO" id="GO:0005634">
    <property type="term" value="C:nucleus"/>
    <property type="evidence" value="ECO:0007669"/>
    <property type="project" value="UniProtKB-SubCell"/>
</dbReference>
<dbReference type="GO" id="GO:0003677">
    <property type="term" value="F:DNA binding"/>
    <property type="evidence" value="ECO:0007669"/>
    <property type="project" value="UniProtKB-KW"/>
</dbReference>
<dbReference type="GO" id="GO:0006915">
    <property type="term" value="P:apoptotic process"/>
    <property type="evidence" value="ECO:0007669"/>
    <property type="project" value="UniProtKB-KW"/>
</dbReference>
<dbReference type="GO" id="GO:0045087">
    <property type="term" value="P:innate immune response"/>
    <property type="evidence" value="ECO:0007669"/>
    <property type="project" value="UniProtKB-KW"/>
</dbReference>
<dbReference type="GO" id="GO:0043065">
    <property type="term" value="P:positive regulation of apoptotic process"/>
    <property type="evidence" value="ECO:0000314"/>
    <property type="project" value="MGI"/>
</dbReference>
<dbReference type="GO" id="GO:0009617">
    <property type="term" value="P:response to bacterium"/>
    <property type="evidence" value="ECO:0000314"/>
    <property type="project" value="MGI"/>
</dbReference>
<dbReference type="FunFam" id="3.10.390.10:FF:000004">
    <property type="entry name" value="Deformed epidermal autoregulatory factor 1"/>
    <property type="match status" value="1"/>
</dbReference>
<dbReference type="Gene3D" id="3.10.390.10">
    <property type="entry name" value="SAND domain-like"/>
    <property type="match status" value="1"/>
</dbReference>
<dbReference type="InterPro" id="IPR004865">
    <property type="entry name" value="HSR_dom"/>
</dbReference>
<dbReference type="InterPro" id="IPR010919">
    <property type="entry name" value="SAND-like_dom_sf"/>
</dbReference>
<dbReference type="InterPro" id="IPR000770">
    <property type="entry name" value="SAND_dom"/>
</dbReference>
<dbReference type="InterPro" id="IPR043563">
    <property type="entry name" value="Sp110/Sp140/Sp140L-like"/>
</dbReference>
<dbReference type="PANTHER" id="PTHR46386">
    <property type="entry name" value="NUCLEAR BODY PROTEIN SP140"/>
    <property type="match status" value="1"/>
</dbReference>
<dbReference type="PANTHER" id="PTHR46386:SF7">
    <property type="entry name" value="SP110 NUCLEAR BODY PROTEIN"/>
    <property type="match status" value="1"/>
</dbReference>
<dbReference type="Pfam" id="PF03172">
    <property type="entry name" value="HSR"/>
    <property type="match status" value="1"/>
</dbReference>
<dbReference type="Pfam" id="PF01342">
    <property type="entry name" value="SAND"/>
    <property type="match status" value="1"/>
</dbReference>
<dbReference type="SMART" id="SM00258">
    <property type="entry name" value="SAND"/>
    <property type="match status" value="1"/>
</dbReference>
<dbReference type="SUPFAM" id="SSF63763">
    <property type="entry name" value="SAND domain-like"/>
    <property type="match status" value="1"/>
</dbReference>
<dbReference type="PROSITE" id="PS51414">
    <property type="entry name" value="HSR"/>
    <property type="match status" value="1"/>
</dbReference>
<dbReference type="PROSITE" id="PS50864">
    <property type="entry name" value="SAND"/>
    <property type="match status" value="1"/>
</dbReference>
<comment type="function">
    <text evidence="6">May act as a transcription factor. Plays a role in the innate immunity against intracellular pathogens. Required for resistance to M.tuberculosis and L.monocytogenes. Promotes apoptosis of infected cells.</text>
</comment>
<comment type="subcellular location">
    <subcellularLocation>
        <location evidence="3 4">Nucleus</location>
    </subcellularLocation>
</comment>
<comment type="tissue specificity">
    <text evidence="6">Detected in lung and macrophages.</text>
</comment>
<comment type="induction">
    <text evidence="6">Up-regulated after infection with M.tuberculosis.</text>
</comment>
<comment type="disease">
    <text evidence="6">Defects in Sp110 are a cause of severely impaired resistance to infection by M.tuberculosis.</text>
</comment>
<comment type="sequence caution" evidence="7">
    <conflict type="miscellaneous discrepancy">
        <sequence resource="EMBL-CDS" id="AAH18413"/>
    </conflict>
    <text>Contaminating sequence. Potential poly-A sequence.</text>
</comment>